<organism>
    <name type="scientific">Shigella boydii serotype 4 (strain Sb227)</name>
    <dbReference type="NCBI Taxonomy" id="300268"/>
    <lineage>
        <taxon>Bacteria</taxon>
        <taxon>Pseudomonadati</taxon>
        <taxon>Pseudomonadota</taxon>
        <taxon>Gammaproteobacteria</taxon>
        <taxon>Enterobacterales</taxon>
        <taxon>Enterobacteriaceae</taxon>
        <taxon>Shigella</taxon>
    </lineage>
</organism>
<dbReference type="EMBL" id="CP000036">
    <property type="protein sequence ID" value="ABB67712.1"/>
    <property type="molecule type" value="Genomic_DNA"/>
</dbReference>
<dbReference type="RefSeq" id="WP_001040205.1">
    <property type="nucleotide sequence ID" value="NC_007613.1"/>
</dbReference>
<dbReference type="SMR" id="Q31W46"/>
<dbReference type="GeneID" id="93778816"/>
<dbReference type="KEGG" id="sbo:SBO_3215"/>
<dbReference type="HOGENOM" id="CLU_089475_5_0_6"/>
<dbReference type="Proteomes" id="UP000007067">
    <property type="component" value="Chromosome"/>
</dbReference>
<dbReference type="GO" id="GO:0005829">
    <property type="term" value="C:cytosol"/>
    <property type="evidence" value="ECO:0007669"/>
    <property type="project" value="TreeGrafter"/>
</dbReference>
<dbReference type="GO" id="GO:0043024">
    <property type="term" value="F:ribosomal small subunit binding"/>
    <property type="evidence" value="ECO:0007669"/>
    <property type="project" value="TreeGrafter"/>
</dbReference>
<dbReference type="GO" id="GO:0030490">
    <property type="term" value="P:maturation of SSU-rRNA"/>
    <property type="evidence" value="ECO:0007669"/>
    <property type="project" value="UniProtKB-UniRule"/>
</dbReference>
<dbReference type="FunFam" id="3.30.300.20:FF:000007">
    <property type="entry name" value="Ribosome-binding factor A"/>
    <property type="match status" value="1"/>
</dbReference>
<dbReference type="Gene3D" id="3.30.300.20">
    <property type="match status" value="1"/>
</dbReference>
<dbReference type="HAMAP" id="MF_00003">
    <property type="entry name" value="RbfA"/>
    <property type="match status" value="1"/>
</dbReference>
<dbReference type="InterPro" id="IPR015946">
    <property type="entry name" value="KH_dom-like_a/b"/>
</dbReference>
<dbReference type="InterPro" id="IPR000238">
    <property type="entry name" value="RbfA"/>
</dbReference>
<dbReference type="InterPro" id="IPR023799">
    <property type="entry name" value="RbfA_dom_sf"/>
</dbReference>
<dbReference type="InterPro" id="IPR020053">
    <property type="entry name" value="Ribosome-bd_factorA_CS"/>
</dbReference>
<dbReference type="NCBIfam" id="TIGR00082">
    <property type="entry name" value="rbfA"/>
    <property type="match status" value="1"/>
</dbReference>
<dbReference type="PANTHER" id="PTHR33515">
    <property type="entry name" value="RIBOSOME-BINDING FACTOR A, CHLOROPLASTIC-RELATED"/>
    <property type="match status" value="1"/>
</dbReference>
<dbReference type="PANTHER" id="PTHR33515:SF1">
    <property type="entry name" value="RIBOSOME-BINDING FACTOR A, CHLOROPLASTIC-RELATED"/>
    <property type="match status" value="1"/>
</dbReference>
<dbReference type="Pfam" id="PF02033">
    <property type="entry name" value="RBFA"/>
    <property type="match status" value="1"/>
</dbReference>
<dbReference type="SUPFAM" id="SSF89919">
    <property type="entry name" value="Ribosome-binding factor A, RbfA"/>
    <property type="match status" value="1"/>
</dbReference>
<dbReference type="PROSITE" id="PS01319">
    <property type="entry name" value="RBFA"/>
    <property type="match status" value="1"/>
</dbReference>
<name>RBFA_SHIBS</name>
<reference key="1">
    <citation type="journal article" date="2005" name="Nucleic Acids Res.">
        <title>Genome dynamics and diversity of Shigella species, the etiologic agents of bacillary dysentery.</title>
        <authorList>
            <person name="Yang F."/>
            <person name="Yang J."/>
            <person name="Zhang X."/>
            <person name="Chen L."/>
            <person name="Jiang Y."/>
            <person name="Yan Y."/>
            <person name="Tang X."/>
            <person name="Wang J."/>
            <person name="Xiong Z."/>
            <person name="Dong J."/>
            <person name="Xue Y."/>
            <person name="Zhu Y."/>
            <person name="Xu X."/>
            <person name="Sun L."/>
            <person name="Chen S."/>
            <person name="Nie H."/>
            <person name="Peng J."/>
            <person name="Xu J."/>
            <person name="Wang Y."/>
            <person name="Yuan Z."/>
            <person name="Wen Y."/>
            <person name="Yao Z."/>
            <person name="Shen Y."/>
            <person name="Qiang B."/>
            <person name="Hou Y."/>
            <person name="Yu J."/>
            <person name="Jin Q."/>
        </authorList>
    </citation>
    <scope>NUCLEOTIDE SEQUENCE [LARGE SCALE GENOMIC DNA]</scope>
    <source>
        <strain>Sb227</strain>
    </source>
</reference>
<comment type="function">
    <text evidence="1">One of several proteins that assist in the late maturation steps of the functional core of the 30S ribosomal subunit. Associates with free 30S ribosomal subunits (but not with 30S subunits that are part of 70S ribosomes or polysomes). Required for efficient processing of 16S rRNA. May interact with the 5'-terminal helix region of 16S rRNA.</text>
</comment>
<comment type="subunit">
    <text evidence="1">Monomer. Binds 30S ribosomal subunits, but not 50S ribosomal subunits or 70S ribosomes.</text>
</comment>
<comment type="subcellular location">
    <subcellularLocation>
        <location evidence="1">Cytoplasm</location>
    </subcellularLocation>
</comment>
<comment type="similarity">
    <text evidence="1">Belongs to the RbfA family.</text>
</comment>
<keyword id="KW-0963">Cytoplasm</keyword>
<keyword id="KW-0690">Ribosome biogenesis</keyword>
<accession>Q31W46</accession>
<gene>
    <name evidence="1" type="primary">rbfA</name>
    <name type="ordered locus">SBO_3215</name>
</gene>
<proteinExistence type="inferred from homology"/>
<sequence>MAKEFGRPQRVAQEMQKEIALILQREIKDPRLGMMTTVSGVEMSRDLAYAKVYVTFLNDKDEDAVKAGIKALQEASGFIRSLLGKAMRLRIVPELTFFYDNSLVEGMRMSNLVTSVVKHDEERRVNPDDSKED</sequence>
<evidence type="ECO:0000255" key="1">
    <source>
        <dbReference type="HAMAP-Rule" id="MF_00003"/>
    </source>
</evidence>
<protein>
    <recommendedName>
        <fullName evidence="1">Ribosome-binding factor A</fullName>
    </recommendedName>
</protein>
<feature type="chain" id="PRO_1000000209" description="Ribosome-binding factor A">
    <location>
        <begin position="1"/>
        <end position="133"/>
    </location>
</feature>